<keyword id="KW-0963">Cytoplasm</keyword>
<keyword id="KW-0489">Methyltransferase</keyword>
<keyword id="KW-1185">Reference proteome</keyword>
<keyword id="KW-0698">rRNA processing</keyword>
<keyword id="KW-0949">S-adenosyl-L-methionine</keyword>
<keyword id="KW-0808">Transferase</keyword>
<dbReference type="EC" id="2.1.1.177" evidence="1"/>
<dbReference type="EMBL" id="BX571863">
    <property type="protein sequence ID" value="CAE13592.1"/>
    <property type="molecule type" value="Genomic_DNA"/>
</dbReference>
<dbReference type="RefSeq" id="WP_011145622.1">
    <property type="nucleotide sequence ID" value="NC_005126.1"/>
</dbReference>
<dbReference type="SMR" id="Q7N760"/>
<dbReference type="STRING" id="243265.plu1298"/>
<dbReference type="GeneID" id="48847576"/>
<dbReference type="KEGG" id="plu:plu1298"/>
<dbReference type="eggNOG" id="COG1576">
    <property type="taxonomic scope" value="Bacteria"/>
</dbReference>
<dbReference type="HOGENOM" id="CLU_100552_1_0_6"/>
<dbReference type="OrthoDB" id="9806643at2"/>
<dbReference type="Proteomes" id="UP000002514">
    <property type="component" value="Chromosome"/>
</dbReference>
<dbReference type="GO" id="GO:0005737">
    <property type="term" value="C:cytoplasm"/>
    <property type="evidence" value="ECO:0007669"/>
    <property type="project" value="UniProtKB-SubCell"/>
</dbReference>
<dbReference type="GO" id="GO:0070038">
    <property type="term" value="F:rRNA (pseudouridine-N3-)-methyltransferase activity"/>
    <property type="evidence" value="ECO:0007669"/>
    <property type="project" value="UniProtKB-UniRule"/>
</dbReference>
<dbReference type="CDD" id="cd18081">
    <property type="entry name" value="RlmH-like"/>
    <property type="match status" value="1"/>
</dbReference>
<dbReference type="Gene3D" id="3.40.1280.10">
    <property type="match status" value="1"/>
</dbReference>
<dbReference type="HAMAP" id="MF_00658">
    <property type="entry name" value="23SrRNA_methyltr_H"/>
    <property type="match status" value="1"/>
</dbReference>
<dbReference type="InterPro" id="IPR029028">
    <property type="entry name" value="Alpha/beta_knot_MTases"/>
</dbReference>
<dbReference type="InterPro" id="IPR003742">
    <property type="entry name" value="RlmH-like"/>
</dbReference>
<dbReference type="InterPro" id="IPR029026">
    <property type="entry name" value="tRNA_m1G_MTases_N"/>
</dbReference>
<dbReference type="NCBIfam" id="NF000984">
    <property type="entry name" value="PRK00103.1-1"/>
    <property type="match status" value="1"/>
</dbReference>
<dbReference type="NCBIfam" id="NF000986">
    <property type="entry name" value="PRK00103.1-4"/>
    <property type="match status" value="1"/>
</dbReference>
<dbReference type="NCBIfam" id="TIGR00246">
    <property type="entry name" value="tRNA_RlmH_YbeA"/>
    <property type="match status" value="1"/>
</dbReference>
<dbReference type="PANTHER" id="PTHR33603">
    <property type="entry name" value="METHYLTRANSFERASE"/>
    <property type="match status" value="1"/>
</dbReference>
<dbReference type="PANTHER" id="PTHR33603:SF1">
    <property type="entry name" value="RIBOSOMAL RNA LARGE SUBUNIT METHYLTRANSFERASE H"/>
    <property type="match status" value="1"/>
</dbReference>
<dbReference type="Pfam" id="PF02590">
    <property type="entry name" value="SPOUT_MTase"/>
    <property type="match status" value="1"/>
</dbReference>
<dbReference type="PIRSF" id="PIRSF004505">
    <property type="entry name" value="MT_bac"/>
    <property type="match status" value="1"/>
</dbReference>
<dbReference type="SUPFAM" id="SSF75217">
    <property type="entry name" value="alpha/beta knot"/>
    <property type="match status" value="1"/>
</dbReference>
<name>RLMH_PHOLL</name>
<gene>
    <name evidence="1" type="primary">rlmH</name>
    <name type="ordered locus">plu1298</name>
</gene>
<accession>Q7N760</accession>
<sequence>MKLQLIAVGTKMPDWIQAGFTDYLRRFPKDMPFDLIEIPAGKRGKNADIKRILEKEGEQMLAAVSKGSRIVTLDIPGSRWETPQLAQQLEHWKRDGRDVSLLIGGPEGLAPACKAAAEQSWSLSPLTLPHPLVRVLVAESLYRAWSITTNHPYHRE</sequence>
<evidence type="ECO:0000255" key="1">
    <source>
        <dbReference type="HAMAP-Rule" id="MF_00658"/>
    </source>
</evidence>
<comment type="function">
    <text evidence="1">Specifically methylates the pseudouridine at position 1915 (m3Psi1915) in 23S rRNA.</text>
</comment>
<comment type="catalytic activity">
    <reaction evidence="1">
        <text>pseudouridine(1915) in 23S rRNA + S-adenosyl-L-methionine = N(3)-methylpseudouridine(1915) in 23S rRNA + S-adenosyl-L-homocysteine + H(+)</text>
        <dbReference type="Rhea" id="RHEA:42752"/>
        <dbReference type="Rhea" id="RHEA-COMP:10221"/>
        <dbReference type="Rhea" id="RHEA-COMP:10222"/>
        <dbReference type="ChEBI" id="CHEBI:15378"/>
        <dbReference type="ChEBI" id="CHEBI:57856"/>
        <dbReference type="ChEBI" id="CHEBI:59789"/>
        <dbReference type="ChEBI" id="CHEBI:65314"/>
        <dbReference type="ChEBI" id="CHEBI:74486"/>
        <dbReference type="EC" id="2.1.1.177"/>
    </reaction>
</comment>
<comment type="subunit">
    <text evidence="1">Homodimer.</text>
</comment>
<comment type="subcellular location">
    <subcellularLocation>
        <location evidence="1">Cytoplasm</location>
    </subcellularLocation>
</comment>
<comment type="similarity">
    <text evidence="1">Belongs to the RNA methyltransferase RlmH family.</text>
</comment>
<feature type="chain" id="PRO_0000198156" description="Ribosomal RNA large subunit methyltransferase H">
    <location>
        <begin position="1"/>
        <end position="156"/>
    </location>
</feature>
<feature type="binding site" evidence="1">
    <location>
        <position position="73"/>
    </location>
    <ligand>
        <name>S-adenosyl-L-methionine</name>
        <dbReference type="ChEBI" id="CHEBI:59789"/>
    </ligand>
</feature>
<feature type="binding site" evidence="1">
    <location>
        <position position="104"/>
    </location>
    <ligand>
        <name>S-adenosyl-L-methionine</name>
        <dbReference type="ChEBI" id="CHEBI:59789"/>
    </ligand>
</feature>
<feature type="binding site" evidence="1">
    <location>
        <begin position="123"/>
        <end position="128"/>
    </location>
    <ligand>
        <name>S-adenosyl-L-methionine</name>
        <dbReference type="ChEBI" id="CHEBI:59789"/>
    </ligand>
</feature>
<reference key="1">
    <citation type="journal article" date="2003" name="Nat. Biotechnol.">
        <title>The genome sequence of the entomopathogenic bacterium Photorhabdus luminescens.</title>
        <authorList>
            <person name="Duchaud E."/>
            <person name="Rusniok C."/>
            <person name="Frangeul L."/>
            <person name="Buchrieser C."/>
            <person name="Givaudan A."/>
            <person name="Taourit S."/>
            <person name="Bocs S."/>
            <person name="Boursaux-Eude C."/>
            <person name="Chandler M."/>
            <person name="Charles J.-F."/>
            <person name="Dassa E."/>
            <person name="Derose R."/>
            <person name="Derzelle S."/>
            <person name="Freyssinet G."/>
            <person name="Gaudriault S."/>
            <person name="Medigue C."/>
            <person name="Lanois A."/>
            <person name="Powell K."/>
            <person name="Siguier P."/>
            <person name="Vincent R."/>
            <person name="Wingate V."/>
            <person name="Zouine M."/>
            <person name="Glaser P."/>
            <person name="Boemare N."/>
            <person name="Danchin A."/>
            <person name="Kunst F."/>
        </authorList>
    </citation>
    <scope>NUCLEOTIDE SEQUENCE [LARGE SCALE GENOMIC DNA]</scope>
    <source>
        <strain>DSM 15139 / CIP 105565 / TT01</strain>
    </source>
</reference>
<protein>
    <recommendedName>
        <fullName evidence="1">Ribosomal RNA large subunit methyltransferase H</fullName>
        <ecNumber evidence="1">2.1.1.177</ecNumber>
    </recommendedName>
    <alternativeName>
        <fullName evidence="1">23S rRNA (pseudouridine1915-N3)-methyltransferase</fullName>
    </alternativeName>
    <alternativeName>
        <fullName evidence="1">23S rRNA m3Psi1915 methyltransferase</fullName>
    </alternativeName>
    <alternativeName>
        <fullName evidence="1">rRNA (pseudouridine-N3-)-methyltransferase RlmH</fullName>
    </alternativeName>
</protein>
<proteinExistence type="inferred from homology"/>
<organism>
    <name type="scientific">Photorhabdus laumondii subsp. laumondii (strain DSM 15139 / CIP 105565 / TT01)</name>
    <name type="common">Photorhabdus luminescens subsp. laumondii</name>
    <dbReference type="NCBI Taxonomy" id="243265"/>
    <lineage>
        <taxon>Bacteria</taxon>
        <taxon>Pseudomonadati</taxon>
        <taxon>Pseudomonadota</taxon>
        <taxon>Gammaproteobacteria</taxon>
        <taxon>Enterobacterales</taxon>
        <taxon>Morganellaceae</taxon>
        <taxon>Photorhabdus</taxon>
    </lineage>
</organism>